<gene>
    <name evidence="1" type="primary">smpB</name>
    <name type="ordered locus">RHA1_ro06409</name>
</gene>
<comment type="function">
    <text evidence="1">Required for rescue of stalled ribosomes mediated by trans-translation. Binds to transfer-messenger RNA (tmRNA), required for stable association of tmRNA with ribosomes. tmRNA and SmpB together mimic tRNA shape, replacing the anticodon stem-loop with SmpB. tmRNA is encoded by the ssrA gene; the 2 termini fold to resemble tRNA(Ala) and it encodes a 'tag peptide', a short internal open reading frame. During trans-translation Ala-aminoacylated tmRNA acts like a tRNA, entering the A-site of stalled ribosomes, displacing the stalled mRNA. The ribosome then switches to translate the ORF on the tmRNA; the nascent peptide is terminated with the 'tag peptide' encoded by the tmRNA and targeted for degradation. The ribosome is freed to recommence translation, which seems to be the essential function of trans-translation.</text>
</comment>
<comment type="subcellular location">
    <subcellularLocation>
        <location evidence="1">Cytoplasm</location>
    </subcellularLocation>
    <text evidence="1">The tmRNA-SmpB complex associates with stalled 70S ribosomes.</text>
</comment>
<comment type="similarity">
    <text evidence="1">Belongs to the SmpB family.</text>
</comment>
<reference key="1">
    <citation type="journal article" date="2006" name="Proc. Natl. Acad. Sci. U.S.A.">
        <title>The complete genome of Rhodococcus sp. RHA1 provides insights into a catabolic powerhouse.</title>
        <authorList>
            <person name="McLeod M.P."/>
            <person name="Warren R.L."/>
            <person name="Hsiao W.W.L."/>
            <person name="Araki N."/>
            <person name="Myhre M."/>
            <person name="Fernandes C."/>
            <person name="Miyazawa D."/>
            <person name="Wong W."/>
            <person name="Lillquist A.L."/>
            <person name="Wang D."/>
            <person name="Dosanjh M."/>
            <person name="Hara H."/>
            <person name="Petrescu A."/>
            <person name="Morin R.D."/>
            <person name="Yang G."/>
            <person name="Stott J.M."/>
            <person name="Schein J.E."/>
            <person name="Shin H."/>
            <person name="Smailus D."/>
            <person name="Siddiqui A.S."/>
            <person name="Marra M.A."/>
            <person name="Jones S.J.M."/>
            <person name="Holt R."/>
            <person name="Brinkman F.S.L."/>
            <person name="Miyauchi K."/>
            <person name="Fukuda M."/>
            <person name="Davies J.E."/>
            <person name="Mohn W.W."/>
            <person name="Eltis L.D."/>
        </authorList>
    </citation>
    <scope>NUCLEOTIDE SEQUENCE [LARGE SCALE GENOMIC DNA]</scope>
    <source>
        <strain>RHA1</strain>
    </source>
</reference>
<proteinExistence type="inferred from homology"/>
<sequence>MKEKGRKVIATNRKARHNYTILDVYEAGIALVGTEVKSLREGKASLVDAFATVDDGEVWLRSLHIPEYTQGTWTNHAPRRTRKLLLHKQEIEHLVGKTREGNQTLVPLSMYFSDGKVKVELALAKGKQDYDKRQDLARRTAEREVTRELGRRVKGMR</sequence>
<accession>Q0S2Q1</accession>
<name>SSRP_RHOJR</name>
<evidence type="ECO:0000255" key="1">
    <source>
        <dbReference type="HAMAP-Rule" id="MF_00023"/>
    </source>
</evidence>
<dbReference type="EMBL" id="CP000431">
    <property type="protein sequence ID" value="ABG98185.1"/>
    <property type="molecule type" value="Genomic_DNA"/>
</dbReference>
<dbReference type="RefSeq" id="WP_009479609.1">
    <property type="nucleotide sequence ID" value="NC_008268.1"/>
</dbReference>
<dbReference type="SMR" id="Q0S2Q1"/>
<dbReference type="KEGG" id="rha:RHA1_ro06409"/>
<dbReference type="eggNOG" id="COG0691">
    <property type="taxonomic scope" value="Bacteria"/>
</dbReference>
<dbReference type="HOGENOM" id="CLU_108953_2_1_11"/>
<dbReference type="OrthoDB" id="9805462at2"/>
<dbReference type="Proteomes" id="UP000008710">
    <property type="component" value="Chromosome"/>
</dbReference>
<dbReference type="GO" id="GO:0005829">
    <property type="term" value="C:cytosol"/>
    <property type="evidence" value="ECO:0007669"/>
    <property type="project" value="TreeGrafter"/>
</dbReference>
<dbReference type="GO" id="GO:0003723">
    <property type="term" value="F:RNA binding"/>
    <property type="evidence" value="ECO:0007669"/>
    <property type="project" value="UniProtKB-UniRule"/>
</dbReference>
<dbReference type="GO" id="GO:0070929">
    <property type="term" value="P:trans-translation"/>
    <property type="evidence" value="ECO:0007669"/>
    <property type="project" value="UniProtKB-UniRule"/>
</dbReference>
<dbReference type="CDD" id="cd09294">
    <property type="entry name" value="SmpB"/>
    <property type="match status" value="1"/>
</dbReference>
<dbReference type="Gene3D" id="2.40.280.10">
    <property type="match status" value="1"/>
</dbReference>
<dbReference type="HAMAP" id="MF_00023">
    <property type="entry name" value="SmpB"/>
    <property type="match status" value="1"/>
</dbReference>
<dbReference type="InterPro" id="IPR023620">
    <property type="entry name" value="SmpB"/>
</dbReference>
<dbReference type="InterPro" id="IPR000037">
    <property type="entry name" value="SsrA-bd_prot"/>
</dbReference>
<dbReference type="InterPro" id="IPR020081">
    <property type="entry name" value="SsrA-bd_prot_CS"/>
</dbReference>
<dbReference type="NCBIfam" id="NF003843">
    <property type="entry name" value="PRK05422.1"/>
    <property type="match status" value="1"/>
</dbReference>
<dbReference type="NCBIfam" id="TIGR00086">
    <property type="entry name" value="smpB"/>
    <property type="match status" value="1"/>
</dbReference>
<dbReference type="PANTHER" id="PTHR30308:SF2">
    <property type="entry name" value="SSRA-BINDING PROTEIN"/>
    <property type="match status" value="1"/>
</dbReference>
<dbReference type="PANTHER" id="PTHR30308">
    <property type="entry name" value="TMRNA-BINDING COMPONENT OF TRANS-TRANSLATION TAGGING COMPLEX"/>
    <property type="match status" value="1"/>
</dbReference>
<dbReference type="Pfam" id="PF01668">
    <property type="entry name" value="SmpB"/>
    <property type="match status" value="1"/>
</dbReference>
<dbReference type="SUPFAM" id="SSF74982">
    <property type="entry name" value="Small protein B (SmpB)"/>
    <property type="match status" value="1"/>
</dbReference>
<dbReference type="PROSITE" id="PS01317">
    <property type="entry name" value="SSRP"/>
    <property type="match status" value="1"/>
</dbReference>
<keyword id="KW-0963">Cytoplasm</keyword>
<keyword id="KW-0694">RNA-binding</keyword>
<organism>
    <name type="scientific">Rhodococcus jostii (strain RHA1)</name>
    <dbReference type="NCBI Taxonomy" id="101510"/>
    <lineage>
        <taxon>Bacteria</taxon>
        <taxon>Bacillati</taxon>
        <taxon>Actinomycetota</taxon>
        <taxon>Actinomycetes</taxon>
        <taxon>Mycobacteriales</taxon>
        <taxon>Nocardiaceae</taxon>
        <taxon>Rhodococcus</taxon>
    </lineage>
</organism>
<feature type="chain" id="PRO_1000074364" description="SsrA-binding protein">
    <location>
        <begin position="1"/>
        <end position="157"/>
    </location>
</feature>
<protein>
    <recommendedName>
        <fullName evidence="1">SsrA-binding protein</fullName>
    </recommendedName>
    <alternativeName>
        <fullName evidence="1">Small protein B</fullName>
    </alternativeName>
</protein>